<proteinExistence type="inferred from homology"/>
<feature type="chain" id="PRO_0000238263" description="ATP synthase subunit alpha">
    <location>
        <begin position="1"/>
        <end position="504"/>
    </location>
</feature>
<feature type="binding site" evidence="1">
    <location>
        <begin position="171"/>
        <end position="178"/>
    </location>
    <ligand>
        <name>ATP</name>
        <dbReference type="ChEBI" id="CHEBI:30616"/>
    </ligand>
</feature>
<feature type="site" description="Required for activity" evidence="1">
    <location>
        <position position="364"/>
    </location>
</feature>
<dbReference type="EC" id="7.1.2.2" evidence="1"/>
<dbReference type="EMBL" id="AE017125">
    <property type="protein sequence ID" value="AAP77024.1"/>
    <property type="molecule type" value="Genomic_DNA"/>
</dbReference>
<dbReference type="RefSeq" id="WP_011115269.1">
    <property type="nucleotide sequence ID" value="NC_004917.1"/>
</dbReference>
<dbReference type="SMR" id="Q7VJ23"/>
<dbReference type="STRING" id="235279.HH_0427"/>
<dbReference type="KEGG" id="hhe:HH_0427"/>
<dbReference type="eggNOG" id="COG0056">
    <property type="taxonomic scope" value="Bacteria"/>
</dbReference>
<dbReference type="HOGENOM" id="CLU_010091_2_1_7"/>
<dbReference type="OrthoDB" id="9803053at2"/>
<dbReference type="Proteomes" id="UP000002495">
    <property type="component" value="Chromosome"/>
</dbReference>
<dbReference type="GO" id="GO:0005886">
    <property type="term" value="C:plasma membrane"/>
    <property type="evidence" value="ECO:0007669"/>
    <property type="project" value="UniProtKB-SubCell"/>
</dbReference>
<dbReference type="GO" id="GO:0045259">
    <property type="term" value="C:proton-transporting ATP synthase complex"/>
    <property type="evidence" value="ECO:0007669"/>
    <property type="project" value="UniProtKB-KW"/>
</dbReference>
<dbReference type="GO" id="GO:0043531">
    <property type="term" value="F:ADP binding"/>
    <property type="evidence" value="ECO:0007669"/>
    <property type="project" value="TreeGrafter"/>
</dbReference>
<dbReference type="GO" id="GO:0005524">
    <property type="term" value="F:ATP binding"/>
    <property type="evidence" value="ECO:0007669"/>
    <property type="project" value="UniProtKB-UniRule"/>
</dbReference>
<dbReference type="GO" id="GO:0046933">
    <property type="term" value="F:proton-transporting ATP synthase activity, rotational mechanism"/>
    <property type="evidence" value="ECO:0007669"/>
    <property type="project" value="UniProtKB-UniRule"/>
</dbReference>
<dbReference type="CDD" id="cd18113">
    <property type="entry name" value="ATP-synt_F1_alpha_C"/>
    <property type="match status" value="1"/>
</dbReference>
<dbReference type="CDD" id="cd18116">
    <property type="entry name" value="ATP-synt_F1_alpha_N"/>
    <property type="match status" value="1"/>
</dbReference>
<dbReference type="CDD" id="cd01132">
    <property type="entry name" value="F1-ATPase_alpha_CD"/>
    <property type="match status" value="1"/>
</dbReference>
<dbReference type="FunFam" id="1.20.150.20:FF:000001">
    <property type="entry name" value="ATP synthase subunit alpha"/>
    <property type="match status" value="1"/>
</dbReference>
<dbReference type="FunFam" id="2.40.30.20:FF:000001">
    <property type="entry name" value="ATP synthase subunit alpha"/>
    <property type="match status" value="1"/>
</dbReference>
<dbReference type="FunFam" id="3.40.50.300:FF:000002">
    <property type="entry name" value="ATP synthase subunit alpha"/>
    <property type="match status" value="1"/>
</dbReference>
<dbReference type="Gene3D" id="2.40.30.20">
    <property type="match status" value="1"/>
</dbReference>
<dbReference type="Gene3D" id="1.20.150.20">
    <property type="entry name" value="ATP synthase alpha/beta chain, C-terminal domain"/>
    <property type="match status" value="1"/>
</dbReference>
<dbReference type="Gene3D" id="3.40.50.300">
    <property type="entry name" value="P-loop containing nucleotide triphosphate hydrolases"/>
    <property type="match status" value="1"/>
</dbReference>
<dbReference type="HAMAP" id="MF_01346">
    <property type="entry name" value="ATP_synth_alpha_bact"/>
    <property type="match status" value="1"/>
</dbReference>
<dbReference type="InterPro" id="IPR023366">
    <property type="entry name" value="ATP_synth_asu-like_sf"/>
</dbReference>
<dbReference type="InterPro" id="IPR000793">
    <property type="entry name" value="ATP_synth_asu_C"/>
</dbReference>
<dbReference type="InterPro" id="IPR038376">
    <property type="entry name" value="ATP_synth_asu_C_sf"/>
</dbReference>
<dbReference type="InterPro" id="IPR033732">
    <property type="entry name" value="ATP_synth_F1_a_nt-bd_dom"/>
</dbReference>
<dbReference type="InterPro" id="IPR005294">
    <property type="entry name" value="ATP_synth_F1_asu"/>
</dbReference>
<dbReference type="InterPro" id="IPR020003">
    <property type="entry name" value="ATPase_a/bsu_AS"/>
</dbReference>
<dbReference type="InterPro" id="IPR004100">
    <property type="entry name" value="ATPase_F1/V1/A1_a/bsu_N"/>
</dbReference>
<dbReference type="InterPro" id="IPR036121">
    <property type="entry name" value="ATPase_F1/V1/A1_a/bsu_N_sf"/>
</dbReference>
<dbReference type="InterPro" id="IPR000194">
    <property type="entry name" value="ATPase_F1/V1/A1_a/bsu_nucl-bd"/>
</dbReference>
<dbReference type="InterPro" id="IPR027417">
    <property type="entry name" value="P-loop_NTPase"/>
</dbReference>
<dbReference type="NCBIfam" id="TIGR00962">
    <property type="entry name" value="atpA"/>
    <property type="match status" value="1"/>
</dbReference>
<dbReference type="NCBIfam" id="NF009884">
    <property type="entry name" value="PRK13343.1"/>
    <property type="match status" value="1"/>
</dbReference>
<dbReference type="PANTHER" id="PTHR48082">
    <property type="entry name" value="ATP SYNTHASE SUBUNIT ALPHA, MITOCHONDRIAL"/>
    <property type="match status" value="1"/>
</dbReference>
<dbReference type="PANTHER" id="PTHR48082:SF2">
    <property type="entry name" value="ATP SYNTHASE SUBUNIT ALPHA, MITOCHONDRIAL"/>
    <property type="match status" value="1"/>
</dbReference>
<dbReference type="Pfam" id="PF00006">
    <property type="entry name" value="ATP-synt_ab"/>
    <property type="match status" value="1"/>
</dbReference>
<dbReference type="Pfam" id="PF00306">
    <property type="entry name" value="ATP-synt_ab_C"/>
    <property type="match status" value="1"/>
</dbReference>
<dbReference type="Pfam" id="PF02874">
    <property type="entry name" value="ATP-synt_ab_N"/>
    <property type="match status" value="1"/>
</dbReference>
<dbReference type="PIRSF" id="PIRSF039088">
    <property type="entry name" value="F_ATPase_subunit_alpha"/>
    <property type="match status" value="1"/>
</dbReference>
<dbReference type="SUPFAM" id="SSF47917">
    <property type="entry name" value="C-terminal domain of alpha and beta subunits of F1 ATP synthase"/>
    <property type="match status" value="1"/>
</dbReference>
<dbReference type="SUPFAM" id="SSF50615">
    <property type="entry name" value="N-terminal domain of alpha and beta subunits of F1 ATP synthase"/>
    <property type="match status" value="1"/>
</dbReference>
<dbReference type="SUPFAM" id="SSF52540">
    <property type="entry name" value="P-loop containing nucleoside triphosphate hydrolases"/>
    <property type="match status" value="1"/>
</dbReference>
<dbReference type="PROSITE" id="PS00152">
    <property type="entry name" value="ATPASE_ALPHA_BETA"/>
    <property type="match status" value="1"/>
</dbReference>
<reference key="1">
    <citation type="journal article" date="2003" name="Proc. Natl. Acad. Sci. U.S.A.">
        <title>The complete genome sequence of the carcinogenic bacterium Helicobacter hepaticus.</title>
        <authorList>
            <person name="Suerbaum S."/>
            <person name="Josenhans C."/>
            <person name="Sterzenbach T."/>
            <person name="Drescher B."/>
            <person name="Brandt P."/>
            <person name="Bell M."/>
            <person name="Droege M."/>
            <person name="Fartmann B."/>
            <person name="Fischer H.-P."/>
            <person name="Ge Z."/>
            <person name="Hoerster A."/>
            <person name="Holland R."/>
            <person name="Klein K."/>
            <person name="Koenig J."/>
            <person name="Macko L."/>
            <person name="Mendz G.L."/>
            <person name="Nyakatura G."/>
            <person name="Schauer D.B."/>
            <person name="Shen Z."/>
            <person name="Weber J."/>
            <person name="Frosch M."/>
            <person name="Fox J.G."/>
        </authorList>
    </citation>
    <scope>NUCLEOTIDE SEQUENCE [LARGE SCALE GENOMIC DNA]</scope>
    <source>
        <strain>ATCC 51449 / 3B1</strain>
    </source>
</reference>
<gene>
    <name evidence="1" type="primary">atpA</name>
    <name type="ordered locus">HH_0427</name>
</gene>
<comment type="function">
    <text evidence="1">Produces ATP from ADP in the presence of a proton gradient across the membrane. The alpha chain is a regulatory subunit.</text>
</comment>
<comment type="catalytic activity">
    <reaction evidence="1">
        <text>ATP + H2O + 4 H(+)(in) = ADP + phosphate + 5 H(+)(out)</text>
        <dbReference type="Rhea" id="RHEA:57720"/>
        <dbReference type="ChEBI" id="CHEBI:15377"/>
        <dbReference type="ChEBI" id="CHEBI:15378"/>
        <dbReference type="ChEBI" id="CHEBI:30616"/>
        <dbReference type="ChEBI" id="CHEBI:43474"/>
        <dbReference type="ChEBI" id="CHEBI:456216"/>
        <dbReference type="EC" id="7.1.2.2"/>
    </reaction>
</comment>
<comment type="subunit">
    <text evidence="1">F-type ATPases have 2 components, CF(1) - the catalytic core - and CF(0) - the membrane proton channel. CF(1) has five subunits: alpha(3), beta(3), gamma(1), delta(1), epsilon(1). CF(0) has three main subunits: a(1), b(2) and c(9-12). The alpha and beta chains form an alternating ring which encloses part of the gamma chain. CF(1) is attached to CF(0) by a central stalk formed by the gamma and epsilon chains, while a peripheral stalk is formed by the delta and b chains.</text>
</comment>
<comment type="subcellular location">
    <subcellularLocation>
        <location evidence="1">Cell inner membrane</location>
        <topology evidence="1">Peripheral membrane protein</topology>
    </subcellularLocation>
</comment>
<comment type="similarity">
    <text evidence="1">Belongs to the ATPase alpha/beta chains family.</text>
</comment>
<evidence type="ECO:0000255" key="1">
    <source>
        <dbReference type="HAMAP-Rule" id="MF_01346"/>
    </source>
</evidence>
<sequence>MTTKIKSEEISSIIKERIENFNINIDISETGKVIAYADGVAKVYGLNNVMYYEMVEFDTGDTGIAFNLEESSVGVVVLGSGRTIKEGTSVKRLKKLMKVPVGDAIVGRVINTLGEPIDGKGAIEANEYRFVEEKAPGIMARKSVHQPLQTGLKAIDALVPIGRGQRELIIGDRQTGKTTVAIDTIINQKGQDVICIYVAVGQKESTVAQVVRKLEEHGAMDYTVVVNAPASFSAAMQFLAPYTGVTIGEYFRDNARHALIIYDDLSKHAVAYREMSLILRRPPGREAFPGDVFYLHSRLLERAAKLNDELGAGSLTALPIIETQAGDVAAYIPTNVISITDGQIFLETDLFNSGIRPAINVGLSVSRVGGAAQIKATKQVAGTLRLDLAQYRELQAFSQFASDLDESSRKQLERGQRMVEILKQPPYSPLSIEKQVIIIYAGANGYLDNIPANKVIKFESELYPFLEAKYPKIFEDISVKKAIDKETEAELSKALEEFKINFGA</sequence>
<keyword id="KW-0066">ATP synthesis</keyword>
<keyword id="KW-0067">ATP-binding</keyword>
<keyword id="KW-0997">Cell inner membrane</keyword>
<keyword id="KW-1003">Cell membrane</keyword>
<keyword id="KW-0139">CF(1)</keyword>
<keyword id="KW-0375">Hydrogen ion transport</keyword>
<keyword id="KW-0406">Ion transport</keyword>
<keyword id="KW-0472">Membrane</keyword>
<keyword id="KW-0547">Nucleotide-binding</keyword>
<keyword id="KW-1185">Reference proteome</keyword>
<keyword id="KW-1278">Translocase</keyword>
<keyword id="KW-0813">Transport</keyword>
<accession>Q7VJ23</accession>
<name>ATPA_HELHP</name>
<organism>
    <name type="scientific">Helicobacter hepaticus (strain ATCC 51449 / 3B1)</name>
    <dbReference type="NCBI Taxonomy" id="235279"/>
    <lineage>
        <taxon>Bacteria</taxon>
        <taxon>Pseudomonadati</taxon>
        <taxon>Campylobacterota</taxon>
        <taxon>Epsilonproteobacteria</taxon>
        <taxon>Campylobacterales</taxon>
        <taxon>Helicobacteraceae</taxon>
        <taxon>Helicobacter</taxon>
    </lineage>
</organism>
<protein>
    <recommendedName>
        <fullName evidence="1">ATP synthase subunit alpha</fullName>
        <ecNumber evidence="1">7.1.2.2</ecNumber>
    </recommendedName>
    <alternativeName>
        <fullName evidence="1">ATP synthase F1 sector subunit alpha</fullName>
    </alternativeName>
    <alternativeName>
        <fullName evidence="1">F-ATPase subunit alpha</fullName>
    </alternativeName>
</protein>